<comment type="function">
    <text evidence="1">Catalyzes the conversion of 3'-phosphate to a 2',3'-cyclic phosphodiester at the end of RNA. The mechanism of action of the enzyme occurs in 3 steps: (A) adenylation of the enzyme by ATP; (B) transfer of adenylate to an RNA-N3'P to produce RNA-N3'PP5'A; (C) and attack of the adjacent 2'-hydroxyl on the 3'-phosphorus in the diester linkage to produce the cyclic end product. The biological role of this enzyme is unknown but it is likely to function in some aspects of cellular RNA processing.</text>
</comment>
<comment type="catalytic activity">
    <reaction evidence="1">
        <text>a 3'-end 3'-phospho-ribonucleotide-RNA + ATP = a 3'-end 2',3'-cyclophospho-ribonucleotide-RNA + AMP + diphosphate</text>
        <dbReference type="Rhea" id="RHEA:23976"/>
        <dbReference type="Rhea" id="RHEA-COMP:10463"/>
        <dbReference type="Rhea" id="RHEA-COMP:10464"/>
        <dbReference type="ChEBI" id="CHEBI:30616"/>
        <dbReference type="ChEBI" id="CHEBI:33019"/>
        <dbReference type="ChEBI" id="CHEBI:83062"/>
        <dbReference type="ChEBI" id="CHEBI:83064"/>
        <dbReference type="ChEBI" id="CHEBI:456215"/>
        <dbReference type="EC" id="6.5.1.4"/>
    </reaction>
</comment>
<comment type="subcellular location">
    <subcellularLocation>
        <location evidence="1">Cytoplasm</location>
    </subcellularLocation>
</comment>
<comment type="similarity">
    <text evidence="1">Belongs to the RNA 3'-terminal cyclase family. Type 1 subfamily.</text>
</comment>
<name>RTCA_ECTM1</name>
<accession>A4XRJ0</accession>
<protein>
    <recommendedName>
        <fullName evidence="1">RNA 3'-terminal phosphate cyclase</fullName>
        <shortName evidence="1">RNA cyclase</shortName>
        <shortName evidence="1">RNA-3'-phosphate cyclase</shortName>
        <ecNumber evidence="1">6.5.1.4</ecNumber>
    </recommendedName>
</protein>
<sequence>MNKDFIELDGAIGGGQILRSALSLSMLTGKPFRIHNIRAKRSRPGLLRQHLTAVTAAAQISSADAEGTQIGSQSLSFAPGAIRGGDYEFAIGTAGSCSLVVQTLLPALLHADQPSRVRISGGTHNPLAPPFEFLERAWLPLLKRMGAQVEIELLRHGFAPAGGGALVMQVTPSALRPLHLETPGPIHSQQATALVADVPGHVAERELARVGKRLKWPEQALKGIWLDKQIGPGNVLLLEIACGEVTELFSSIGQSGVRAERVADQAVDQARQWLHSGAAVDEHLADQLLLPLAMAGGGSFSTTHMSEHLSSNIQVIRQFLNVEIVCTQANERILRVELRQG</sequence>
<organism>
    <name type="scientific">Ectopseudomonas mendocina (strain ymp)</name>
    <name type="common">Pseudomonas mendocina</name>
    <dbReference type="NCBI Taxonomy" id="399739"/>
    <lineage>
        <taxon>Bacteria</taxon>
        <taxon>Pseudomonadati</taxon>
        <taxon>Pseudomonadota</taxon>
        <taxon>Gammaproteobacteria</taxon>
        <taxon>Pseudomonadales</taxon>
        <taxon>Pseudomonadaceae</taxon>
        <taxon>Ectopseudomonas</taxon>
    </lineage>
</organism>
<gene>
    <name evidence="1" type="primary">rtcA</name>
    <name type="ordered locus">Pmen_1191</name>
</gene>
<evidence type="ECO:0000255" key="1">
    <source>
        <dbReference type="HAMAP-Rule" id="MF_00200"/>
    </source>
</evidence>
<keyword id="KW-0067">ATP-binding</keyword>
<keyword id="KW-0963">Cytoplasm</keyword>
<keyword id="KW-0436">Ligase</keyword>
<keyword id="KW-0547">Nucleotide-binding</keyword>
<proteinExistence type="inferred from homology"/>
<reference key="1">
    <citation type="submission" date="2007-04" db="EMBL/GenBank/DDBJ databases">
        <title>Complete sequence of Pseudomonas mendocina ymp.</title>
        <authorList>
            <consortium name="US DOE Joint Genome Institute"/>
            <person name="Copeland A."/>
            <person name="Lucas S."/>
            <person name="Lapidus A."/>
            <person name="Barry K."/>
            <person name="Glavina del Rio T."/>
            <person name="Dalin E."/>
            <person name="Tice H."/>
            <person name="Pitluck S."/>
            <person name="Kiss H."/>
            <person name="Brettin T."/>
            <person name="Detter J.C."/>
            <person name="Bruce D."/>
            <person name="Han C."/>
            <person name="Schmutz J."/>
            <person name="Larimer F."/>
            <person name="Land M."/>
            <person name="Hauser L."/>
            <person name="Kyrpides N."/>
            <person name="Mikhailova N."/>
            <person name="Hersman L."/>
            <person name="Dubois J."/>
            <person name="Maurice P."/>
            <person name="Richardson P."/>
        </authorList>
    </citation>
    <scope>NUCLEOTIDE SEQUENCE [LARGE SCALE GENOMIC DNA]</scope>
    <source>
        <strain>ymp</strain>
    </source>
</reference>
<feature type="chain" id="PRO_1000012114" description="RNA 3'-terminal phosphate cyclase">
    <location>
        <begin position="1"/>
        <end position="341"/>
    </location>
</feature>
<feature type="active site" description="Tele-AMP-histidine intermediate" evidence="1">
    <location>
        <position position="308"/>
    </location>
</feature>
<feature type="binding site" evidence="1">
    <location>
        <position position="102"/>
    </location>
    <ligand>
        <name>ATP</name>
        <dbReference type="ChEBI" id="CHEBI:30616"/>
    </ligand>
</feature>
<feature type="binding site" evidence="1">
    <location>
        <begin position="283"/>
        <end position="287"/>
    </location>
    <ligand>
        <name>ATP</name>
        <dbReference type="ChEBI" id="CHEBI:30616"/>
    </ligand>
</feature>
<dbReference type="EC" id="6.5.1.4" evidence="1"/>
<dbReference type="EMBL" id="CP000680">
    <property type="protein sequence ID" value="ABP83956.1"/>
    <property type="molecule type" value="Genomic_DNA"/>
</dbReference>
<dbReference type="SMR" id="A4XRJ0"/>
<dbReference type="STRING" id="399739.Pmen_1191"/>
<dbReference type="KEGG" id="pmy:Pmen_1191"/>
<dbReference type="PATRIC" id="fig|399739.8.peg.1203"/>
<dbReference type="eggNOG" id="COG0430">
    <property type="taxonomic scope" value="Bacteria"/>
</dbReference>
<dbReference type="HOGENOM" id="CLU_027882_0_0_6"/>
<dbReference type="OrthoDB" id="9789235at2"/>
<dbReference type="GO" id="GO:0005737">
    <property type="term" value="C:cytoplasm"/>
    <property type="evidence" value="ECO:0007669"/>
    <property type="project" value="UniProtKB-SubCell"/>
</dbReference>
<dbReference type="GO" id="GO:0005524">
    <property type="term" value="F:ATP binding"/>
    <property type="evidence" value="ECO:0007669"/>
    <property type="project" value="UniProtKB-KW"/>
</dbReference>
<dbReference type="GO" id="GO:0003963">
    <property type="term" value="F:RNA-3'-phosphate cyclase activity"/>
    <property type="evidence" value="ECO:0007669"/>
    <property type="project" value="UniProtKB-UniRule"/>
</dbReference>
<dbReference type="GO" id="GO:0006396">
    <property type="term" value="P:RNA processing"/>
    <property type="evidence" value="ECO:0007669"/>
    <property type="project" value="InterPro"/>
</dbReference>
<dbReference type="CDD" id="cd00874">
    <property type="entry name" value="RNA_Cyclase_Class_II"/>
    <property type="match status" value="1"/>
</dbReference>
<dbReference type="Gene3D" id="3.65.10.20">
    <property type="entry name" value="RNA 3'-terminal phosphate cyclase domain"/>
    <property type="match status" value="1"/>
</dbReference>
<dbReference type="Gene3D" id="3.30.360.20">
    <property type="entry name" value="RNA 3'-terminal phosphate cyclase, insert domain"/>
    <property type="match status" value="1"/>
</dbReference>
<dbReference type="HAMAP" id="MF_00200">
    <property type="entry name" value="RTC"/>
    <property type="match status" value="1"/>
</dbReference>
<dbReference type="InterPro" id="IPR013791">
    <property type="entry name" value="RNA3'-term_phos_cycl_insert"/>
</dbReference>
<dbReference type="InterPro" id="IPR023797">
    <property type="entry name" value="RNA3'_phos_cyclase_dom"/>
</dbReference>
<dbReference type="InterPro" id="IPR037136">
    <property type="entry name" value="RNA3'_phos_cyclase_dom_sf"/>
</dbReference>
<dbReference type="InterPro" id="IPR000228">
    <property type="entry name" value="RNA3'_term_phos_cyc"/>
</dbReference>
<dbReference type="InterPro" id="IPR017770">
    <property type="entry name" value="RNA3'_term_phos_cyc_type_1"/>
</dbReference>
<dbReference type="InterPro" id="IPR020719">
    <property type="entry name" value="RNA3'_term_phos_cycl-like_CS"/>
</dbReference>
<dbReference type="InterPro" id="IPR013792">
    <property type="entry name" value="RNA3'P_cycl/enolpyr_Trfase_a/b"/>
</dbReference>
<dbReference type="InterPro" id="IPR036553">
    <property type="entry name" value="RPTC_insert"/>
</dbReference>
<dbReference type="NCBIfam" id="NF003246">
    <property type="entry name" value="PRK04204.1-2"/>
    <property type="match status" value="1"/>
</dbReference>
<dbReference type="NCBIfam" id="NF003247">
    <property type="entry name" value="PRK04204.1-3"/>
    <property type="match status" value="1"/>
</dbReference>
<dbReference type="NCBIfam" id="TIGR03399">
    <property type="entry name" value="RNA_3prim_cycl"/>
    <property type="match status" value="1"/>
</dbReference>
<dbReference type="PANTHER" id="PTHR11096">
    <property type="entry name" value="RNA 3' TERMINAL PHOSPHATE CYCLASE"/>
    <property type="match status" value="1"/>
</dbReference>
<dbReference type="PANTHER" id="PTHR11096:SF0">
    <property type="entry name" value="RNA 3'-TERMINAL PHOSPHATE CYCLASE"/>
    <property type="match status" value="1"/>
</dbReference>
<dbReference type="Pfam" id="PF01137">
    <property type="entry name" value="RTC"/>
    <property type="match status" value="1"/>
</dbReference>
<dbReference type="Pfam" id="PF05189">
    <property type="entry name" value="RTC_insert"/>
    <property type="match status" value="1"/>
</dbReference>
<dbReference type="PIRSF" id="PIRSF005378">
    <property type="entry name" value="RNA3'_term_phos_cycl_euk"/>
    <property type="match status" value="1"/>
</dbReference>
<dbReference type="SUPFAM" id="SSF55205">
    <property type="entry name" value="EPT/RTPC-like"/>
    <property type="match status" value="2"/>
</dbReference>
<dbReference type="SUPFAM" id="SSF52913">
    <property type="entry name" value="RNA 3'-terminal phosphate cyclase, RPTC, insert domain"/>
    <property type="match status" value="1"/>
</dbReference>
<dbReference type="PROSITE" id="PS01287">
    <property type="entry name" value="RTC"/>
    <property type="match status" value="1"/>
</dbReference>